<sequence length="304" mass="35453">MGRAEAGTPKAISNALKSKGLQRLRWYCSACQKQMRDENGFKCHTQSEGHIRQMNVIAMNPGKRIQDFSNQFLRDFISLLRTAHGEKKIHFNQFYQEYIRDKNHVHMNATRWHTLSEFCKFLGRQGMCRVEENEKGFFISYIDKNPANILRNEANKKRERQEKSDEEQRLRLLDEQIKRAYESAQNNEDNKDGSSREQPVLHEIDLSKKGNPIQLNLSSSSDSHSAQNEFFQTRNTPTFSFSSSSSQTSLKHKPKNVFAELNKSRKKNNKDSLDQGQNVKRPRSAVEDIIAQETMREKRRNIKL</sequence>
<name>KIN17_SCHPO</name>
<protein>
    <recommendedName>
        <fullName>KIN17-like protein</fullName>
    </recommendedName>
</protein>
<dbReference type="EMBL" id="CU329671">
    <property type="protein sequence ID" value="CAB44761.1"/>
    <property type="molecule type" value="Genomic_DNA"/>
</dbReference>
<dbReference type="PIR" id="T40316">
    <property type="entry name" value="T40316"/>
</dbReference>
<dbReference type="SMR" id="Q9Y7X9"/>
<dbReference type="BioGRID" id="277465">
    <property type="interactions" value="1"/>
</dbReference>
<dbReference type="FunCoup" id="Q9Y7X9">
    <property type="interactions" value="882"/>
</dbReference>
<dbReference type="STRING" id="284812.Q9Y7X9"/>
<dbReference type="PaxDb" id="4896-SPBC365.09c.1"/>
<dbReference type="EnsemblFungi" id="SPBC365.09c.1">
    <property type="protein sequence ID" value="SPBC365.09c.1:pep"/>
    <property type="gene ID" value="SPBC365.09c"/>
</dbReference>
<dbReference type="KEGG" id="spo:2540949"/>
<dbReference type="PomBase" id="SPBC365.09c"/>
<dbReference type="VEuPathDB" id="FungiDB:SPBC365.09c"/>
<dbReference type="eggNOG" id="KOG2837">
    <property type="taxonomic scope" value="Eukaryota"/>
</dbReference>
<dbReference type="HOGENOM" id="CLU_030065_0_0_1"/>
<dbReference type="InParanoid" id="Q9Y7X9"/>
<dbReference type="OMA" id="KWVANKM"/>
<dbReference type="PhylomeDB" id="Q9Y7X9"/>
<dbReference type="PRO" id="PR:Q9Y7X9"/>
<dbReference type="Proteomes" id="UP000002485">
    <property type="component" value="Chromosome II"/>
</dbReference>
<dbReference type="GO" id="GO:0005737">
    <property type="term" value="C:cytoplasm"/>
    <property type="evidence" value="ECO:0000266"/>
    <property type="project" value="PomBase"/>
</dbReference>
<dbReference type="GO" id="GO:0005730">
    <property type="term" value="C:nucleolus"/>
    <property type="evidence" value="ECO:0007005"/>
    <property type="project" value="PomBase"/>
</dbReference>
<dbReference type="GO" id="GO:0005634">
    <property type="term" value="C:nucleus"/>
    <property type="evidence" value="ECO:0007005"/>
    <property type="project" value="PomBase"/>
</dbReference>
<dbReference type="GO" id="GO:0003690">
    <property type="term" value="F:double-stranded DNA binding"/>
    <property type="evidence" value="ECO:0000318"/>
    <property type="project" value="GO_Central"/>
</dbReference>
<dbReference type="GO" id="GO:0008270">
    <property type="term" value="F:zinc ion binding"/>
    <property type="evidence" value="ECO:0007669"/>
    <property type="project" value="UniProtKB-KW"/>
</dbReference>
<dbReference type="GO" id="GO:0006974">
    <property type="term" value="P:DNA damage response"/>
    <property type="evidence" value="ECO:0000318"/>
    <property type="project" value="GO_Central"/>
</dbReference>
<dbReference type="GO" id="GO:0006260">
    <property type="term" value="P:DNA replication"/>
    <property type="evidence" value="ECO:0000318"/>
    <property type="project" value="GO_Central"/>
</dbReference>
<dbReference type="FunFam" id="1.10.10.2030:FF:000001">
    <property type="entry name" value="DNA/RNA-binding protein KIN17, putative"/>
    <property type="match status" value="1"/>
</dbReference>
<dbReference type="Gene3D" id="1.10.10.2030">
    <property type="entry name" value="DNA/RNA-binding protein Kin17, conserved domain"/>
    <property type="match status" value="1"/>
</dbReference>
<dbReference type="InterPro" id="IPR056767">
    <property type="entry name" value="C2H2-Znf_KIN17"/>
</dbReference>
<dbReference type="InterPro" id="IPR019447">
    <property type="entry name" value="DNA/RNA-bd_Kin17_WH-like_dom"/>
</dbReference>
<dbReference type="InterPro" id="IPR037321">
    <property type="entry name" value="KIN17-like"/>
</dbReference>
<dbReference type="InterPro" id="IPR038254">
    <property type="entry name" value="KIN17_WH-like_sf"/>
</dbReference>
<dbReference type="InterPro" id="IPR036236">
    <property type="entry name" value="Znf_C2H2_sf"/>
</dbReference>
<dbReference type="InterPro" id="IPR013087">
    <property type="entry name" value="Znf_C2H2_type"/>
</dbReference>
<dbReference type="PANTHER" id="PTHR12805:SF0">
    <property type="entry name" value="DNA_RNA-BINDING PROTEIN KIN17"/>
    <property type="match status" value="1"/>
</dbReference>
<dbReference type="PANTHER" id="PTHR12805">
    <property type="entry name" value="KIN17 KIN, ANTIGENIC DETERMINANT OF RECA PROTEIN HOMOLOG"/>
    <property type="match status" value="1"/>
</dbReference>
<dbReference type="Pfam" id="PF25095">
    <property type="entry name" value="C2H2-zf_KIN17"/>
    <property type="match status" value="1"/>
</dbReference>
<dbReference type="Pfam" id="PF10357">
    <property type="entry name" value="WH_KIN17"/>
    <property type="match status" value="1"/>
</dbReference>
<dbReference type="SMART" id="SM01253">
    <property type="entry name" value="Kin17_mid"/>
    <property type="match status" value="1"/>
</dbReference>
<dbReference type="SUPFAM" id="SSF57667">
    <property type="entry name" value="beta-beta-alpha zinc fingers"/>
    <property type="match status" value="1"/>
</dbReference>
<dbReference type="PROSITE" id="PS00028">
    <property type="entry name" value="ZINC_FINGER_C2H2_1"/>
    <property type="match status" value="1"/>
</dbReference>
<accession>Q9Y7X9</accession>
<feature type="chain" id="PRO_0000351449" description="KIN17-like protein">
    <location>
        <begin position="1"/>
        <end position="304"/>
    </location>
</feature>
<feature type="zinc finger region" description="C2H2-type">
    <location>
        <begin position="26"/>
        <end position="50"/>
    </location>
</feature>
<feature type="region of interest" description="Disordered" evidence="1">
    <location>
        <begin position="204"/>
        <end position="228"/>
    </location>
</feature>
<feature type="region of interest" description="Disordered" evidence="1">
    <location>
        <begin position="261"/>
        <end position="291"/>
    </location>
</feature>
<proteinExistence type="inferred from homology"/>
<reference key="1">
    <citation type="journal article" date="2002" name="Nature">
        <title>The genome sequence of Schizosaccharomyces pombe.</title>
        <authorList>
            <person name="Wood V."/>
            <person name="Gwilliam R."/>
            <person name="Rajandream M.A."/>
            <person name="Lyne M.H."/>
            <person name="Lyne R."/>
            <person name="Stewart A."/>
            <person name="Sgouros J.G."/>
            <person name="Peat N."/>
            <person name="Hayles J."/>
            <person name="Baker S.G."/>
            <person name="Basham D."/>
            <person name="Bowman S."/>
            <person name="Brooks K."/>
            <person name="Brown D."/>
            <person name="Brown S."/>
            <person name="Chillingworth T."/>
            <person name="Churcher C.M."/>
            <person name="Collins M."/>
            <person name="Connor R."/>
            <person name="Cronin A."/>
            <person name="Davis P."/>
            <person name="Feltwell T."/>
            <person name="Fraser A."/>
            <person name="Gentles S."/>
            <person name="Goble A."/>
            <person name="Hamlin N."/>
            <person name="Harris D.E."/>
            <person name="Hidalgo J."/>
            <person name="Hodgson G."/>
            <person name="Holroyd S."/>
            <person name="Hornsby T."/>
            <person name="Howarth S."/>
            <person name="Huckle E.J."/>
            <person name="Hunt S."/>
            <person name="Jagels K."/>
            <person name="James K.D."/>
            <person name="Jones L."/>
            <person name="Jones M."/>
            <person name="Leather S."/>
            <person name="McDonald S."/>
            <person name="McLean J."/>
            <person name="Mooney P."/>
            <person name="Moule S."/>
            <person name="Mungall K.L."/>
            <person name="Murphy L.D."/>
            <person name="Niblett D."/>
            <person name="Odell C."/>
            <person name="Oliver K."/>
            <person name="O'Neil S."/>
            <person name="Pearson D."/>
            <person name="Quail M.A."/>
            <person name="Rabbinowitsch E."/>
            <person name="Rutherford K.M."/>
            <person name="Rutter S."/>
            <person name="Saunders D."/>
            <person name="Seeger K."/>
            <person name="Sharp S."/>
            <person name="Skelton J."/>
            <person name="Simmonds M.N."/>
            <person name="Squares R."/>
            <person name="Squares S."/>
            <person name="Stevens K."/>
            <person name="Taylor K."/>
            <person name="Taylor R.G."/>
            <person name="Tivey A."/>
            <person name="Walsh S.V."/>
            <person name="Warren T."/>
            <person name="Whitehead S."/>
            <person name="Woodward J.R."/>
            <person name="Volckaert G."/>
            <person name="Aert R."/>
            <person name="Robben J."/>
            <person name="Grymonprez B."/>
            <person name="Weltjens I."/>
            <person name="Vanstreels E."/>
            <person name="Rieger M."/>
            <person name="Schaefer M."/>
            <person name="Mueller-Auer S."/>
            <person name="Gabel C."/>
            <person name="Fuchs M."/>
            <person name="Duesterhoeft A."/>
            <person name="Fritzc C."/>
            <person name="Holzer E."/>
            <person name="Moestl D."/>
            <person name="Hilbert H."/>
            <person name="Borzym K."/>
            <person name="Langer I."/>
            <person name="Beck A."/>
            <person name="Lehrach H."/>
            <person name="Reinhardt R."/>
            <person name="Pohl T.M."/>
            <person name="Eger P."/>
            <person name="Zimmermann W."/>
            <person name="Wedler H."/>
            <person name="Wambutt R."/>
            <person name="Purnelle B."/>
            <person name="Goffeau A."/>
            <person name="Cadieu E."/>
            <person name="Dreano S."/>
            <person name="Gloux S."/>
            <person name="Lelaure V."/>
            <person name="Mottier S."/>
            <person name="Galibert F."/>
            <person name="Aves S.J."/>
            <person name="Xiang Z."/>
            <person name="Hunt C."/>
            <person name="Moore K."/>
            <person name="Hurst S.M."/>
            <person name="Lucas M."/>
            <person name="Rochet M."/>
            <person name="Gaillardin C."/>
            <person name="Tallada V.A."/>
            <person name="Garzon A."/>
            <person name="Thode G."/>
            <person name="Daga R.R."/>
            <person name="Cruzado L."/>
            <person name="Jimenez J."/>
            <person name="Sanchez M."/>
            <person name="del Rey F."/>
            <person name="Benito J."/>
            <person name="Dominguez A."/>
            <person name="Revuelta J.L."/>
            <person name="Moreno S."/>
            <person name="Armstrong J."/>
            <person name="Forsburg S.L."/>
            <person name="Cerutti L."/>
            <person name="Lowe T."/>
            <person name="McCombie W.R."/>
            <person name="Paulsen I."/>
            <person name="Potashkin J."/>
            <person name="Shpakovski G.V."/>
            <person name="Ussery D."/>
            <person name="Barrell B.G."/>
            <person name="Nurse P."/>
        </authorList>
    </citation>
    <scope>NUCLEOTIDE SEQUENCE [LARGE SCALE GENOMIC DNA]</scope>
    <source>
        <strain>972 / ATCC 24843</strain>
    </source>
</reference>
<reference key="2">
    <citation type="journal article" date="2006" name="Nat. Biotechnol.">
        <title>ORFeome cloning and global analysis of protein localization in the fission yeast Schizosaccharomyces pombe.</title>
        <authorList>
            <person name="Matsuyama A."/>
            <person name="Arai R."/>
            <person name="Yashiroda Y."/>
            <person name="Shirai A."/>
            <person name="Kamata A."/>
            <person name="Sekido S."/>
            <person name="Kobayashi Y."/>
            <person name="Hashimoto A."/>
            <person name="Hamamoto M."/>
            <person name="Hiraoka Y."/>
            <person name="Horinouchi S."/>
            <person name="Yoshida M."/>
        </authorList>
    </citation>
    <scope>SUBCELLULAR LOCATION [LARGE SCALE ANALYSIS]</scope>
</reference>
<keyword id="KW-0479">Metal-binding</keyword>
<keyword id="KW-0539">Nucleus</keyword>
<keyword id="KW-1185">Reference proteome</keyword>
<keyword id="KW-0862">Zinc</keyword>
<keyword id="KW-0863">Zinc-finger</keyword>
<evidence type="ECO:0000256" key="1">
    <source>
        <dbReference type="SAM" id="MobiDB-lite"/>
    </source>
</evidence>
<evidence type="ECO:0000269" key="2">
    <source>
    </source>
</evidence>
<evidence type="ECO:0000305" key="3"/>
<gene>
    <name type="ORF">SPBC365.09c</name>
</gene>
<comment type="subcellular location">
    <subcellularLocation>
        <location evidence="2">Nucleus</location>
        <location evidence="2">Nucleolus</location>
    </subcellularLocation>
</comment>
<comment type="similarity">
    <text evidence="3">Belongs to the KIN17 family.</text>
</comment>
<organism>
    <name type="scientific">Schizosaccharomyces pombe (strain 972 / ATCC 24843)</name>
    <name type="common">Fission yeast</name>
    <dbReference type="NCBI Taxonomy" id="284812"/>
    <lineage>
        <taxon>Eukaryota</taxon>
        <taxon>Fungi</taxon>
        <taxon>Dikarya</taxon>
        <taxon>Ascomycota</taxon>
        <taxon>Taphrinomycotina</taxon>
        <taxon>Schizosaccharomycetes</taxon>
        <taxon>Schizosaccharomycetales</taxon>
        <taxon>Schizosaccharomycetaceae</taxon>
        <taxon>Schizosaccharomyces</taxon>
    </lineage>
</organism>